<name>GLMU_FRATO</name>
<protein>
    <recommendedName>
        <fullName evidence="1">Bifunctional protein GlmU</fullName>
    </recommendedName>
    <domain>
        <recommendedName>
            <fullName evidence="1">UDP-N-acetylglucosamine pyrophosphorylase</fullName>
            <ecNumber evidence="1">2.7.7.23</ecNumber>
        </recommendedName>
        <alternativeName>
            <fullName evidence="1">N-acetylglucosamine-1-phosphate uridyltransferase</fullName>
        </alternativeName>
    </domain>
    <domain>
        <recommendedName>
            <fullName evidence="1">Glucosamine-1-phosphate N-acetyltransferase</fullName>
            <ecNumber evidence="1">2.3.1.157</ecNumber>
        </recommendedName>
    </domain>
</protein>
<sequence>MGLSVVILAAGKGSRMNSNKPKVLQTLAAKTLIEHVVSSVEKLNPDNIVVVTGHLKEQVEDALQGRNITFVYQQQQLGTGHAVLQALPYLKEQKVLILYGDVPLISTEVLENLVDTTNYDDLGVLTAFVENPQGLGRIVRDKFGAVTEIVEEKDANDIQRQIKEINTGIYCVHKNLLQKWLPEIKANNVQKEYYLTDIITFAKADHVSINVTHPINEFEILGVNDRTQLASLERVWQRNVAEKIMAKGVSIADPNRFDVRGNLDVGKDCWIDINVIIKGNVKLGNNVVIGANCILKNCIIEDNVRIKSNSMVDGSIIREGAIVGPFARVRPECDVKEGAVIGNFVEAKKTILGKGSKASHLTYLGDSEIGANCNIGAGVITCNYDGVNKHKTVIGDYAFIGSDSQLIAPVNIGQGATVGAGSTIVKDVPADNLAISRARQRHIDTWQRSVKKTDK</sequence>
<accession>Q0BN96</accession>
<keyword id="KW-0012">Acyltransferase</keyword>
<keyword id="KW-0133">Cell shape</keyword>
<keyword id="KW-0961">Cell wall biogenesis/degradation</keyword>
<keyword id="KW-0963">Cytoplasm</keyword>
<keyword id="KW-0460">Magnesium</keyword>
<keyword id="KW-0479">Metal-binding</keyword>
<keyword id="KW-0511">Multifunctional enzyme</keyword>
<keyword id="KW-0548">Nucleotidyltransferase</keyword>
<keyword id="KW-0573">Peptidoglycan synthesis</keyword>
<keyword id="KW-0677">Repeat</keyword>
<keyword id="KW-0808">Transferase</keyword>
<comment type="function">
    <text evidence="1">Catalyzes the last two sequential reactions in the de novo biosynthetic pathway for UDP-N-acetylglucosamine (UDP-GlcNAc). The C-terminal domain catalyzes the transfer of acetyl group from acetyl coenzyme A to glucosamine-1-phosphate (GlcN-1-P) to produce N-acetylglucosamine-1-phosphate (GlcNAc-1-P), which is converted into UDP-GlcNAc by the transfer of uridine 5-monophosphate (from uridine 5-triphosphate), a reaction catalyzed by the N-terminal domain.</text>
</comment>
<comment type="catalytic activity">
    <reaction evidence="1">
        <text>alpha-D-glucosamine 1-phosphate + acetyl-CoA = N-acetyl-alpha-D-glucosamine 1-phosphate + CoA + H(+)</text>
        <dbReference type="Rhea" id="RHEA:13725"/>
        <dbReference type="ChEBI" id="CHEBI:15378"/>
        <dbReference type="ChEBI" id="CHEBI:57287"/>
        <dbReference type="ChEBI" id="CHEBI:57288"/>
        <dbReference type="ChEBI" id="CHEBI:57776"/>
        <dbReference type="ChEBI" id="CHEBI:58516"/>
        <dbReference type="EC" id="2.3.1.157"/>
    </reaction>
</comment>
<comment type="catalytic activity">
    <reaction evidence="1">
        <text>N-acetyl-alpha-D-glucosamine 1-phosphate + UTP + H(+) = UDP-N-acetyl-alpha-D-glucosamine + diphosphate</text>
        <dbReference type="Rhea" id="RHEA:13509"/>
        <dbReference type="ChEBI" id="CHEBI:15378"/>
        <dbReference type="ChEBI" id="CHEBI:33019"/>
        <dbReference type="ChEBI" id="CHEBI:46398"/>
        <dbReference type="ChEBI" id="CHEBI:57705"/>
        <dbReference type="ChEBI" id="CHEBI:57776"/>
        <dbReference type="EC" id="2.7.7.23"/>
    </reaction>
</comment>
<comment type="cofactor">
    <cofactor evidence="1">
        <name>Mg(2+)</name>
        <dbReference type="ChEBI" id="CHEBI:18420"/>
    </cofactor>
    <text evidence="1">Binds 1 Mg(2+) ion per subunit.</text>
</comment>
<comment type="pathway">
    <text evidence="1">Nucleotide-sugar biosynthesis; UDP-N-acetyl-alpha-D-glucosamine biosynthesis; N-acetyl-alpha-D-glucosamine 1-phosphate from alpha-D-glucosamine 6-phosphate (route II): step 2/2.</text>
</comment>
<comment type="pathway">
    <text evidence="1">Nucleotide-sugar biosynthesis; UDP-N-acetyl-alpha-D-glucosamine biosynthesis; UDP-N-acetyl-alpha-D-glucosamine from N-acetyl-alpha-D-glucosamine 1-phosphate: step 1/1.</text>
</comment>
<comment type="pathway">
    <text evidence="1">Bacterial outer membrane biogenesis; LPS lipid A biosynthesis.</text>
</comment>
<comment type="subunit">
    <text evidence="1">Homotrimer.</text>
</comment>
<comment type="subcellular location">
    <subcellularLocation>
        <location evidence="1">Cytoplasm</location>
    </subcellularLocation>
</comment>
<comment type="similarity">
    <text evidence="1">In the N-terminal section; belongs to the N-acetylglucosamine-1-phosphate uridyltransferase family.</text>
</comment>
<comment type="similarity">
    <text evidence="1">In the C-terminal section; belongs to the transferase hexapeptide repeat family.</text>
</comment>
<organism>
    <name type="scientific">Francisella tularensis subsp. holarctica (strain OSU18)</name>
    <dbReference type="NCBI Taxonomy" id="393011"/>
    <lineage>
        <taxon>Bacteria</taxon>
        <taxon>Pseudomonadati</taxon>
        <taxon>Pseudomonadota</taxon>
        <taxon>Gammaproteobacteria</taxon>
        <taxon>Thiotrichales</taxon>
        <taxon>Francisellaceae</taxon>
        <taxon>Francisella</taxon>
    </lineage>
</organism>
<feature type="chain" id="PRO_0000263130" description="Bifunctional protein GlmU">
    <location>
        <begin position="1"/>
        <end position="455"/>
    </location>
</feature>
<feature type="region of interest" description="Pyrophosphorylase" evidence="1">
    <location>
        <begin position="1"/>
        <end position="226"/>
    </location>
</feature>
<feature type="region of interest" description="Linker" evidence="1">
    <location>
        <begin position="227"/>
        <end position="247"/>
    </location>
</feature>
<feature type="region of interest" description="N-acetyltransferase" evidence="1">
    <location>
        <begin position="248"/>
        <end position="455"/>
    </location>
</feature>
<feature type="active site" description="Proton acceptor" evidence="1">
    <location>
        <position position="360"/>
    </location>
</feature>
<feature type="binding site" evidence="1">
    <location>
        <begin position="8"/>
        <end position="11"/>
    </location>
    <ligand>
        <name>UDP-N-acetyl-alpha-D-glucosamine</name>
        <dbReference type="ChEBI" id="CHEBI:57705"/>
    </ligand>
</feature>
<feature type="binding site" evidence="1">
    <location>
        <position position="22"/>
    </location>
    <ligand>
        <name>UDP-N-acetyl-alpha-D-glucosamine</name>
        <dbReference type="ChEBI" id="CHEBI:57705"/>
    </ligand>
</feature>
<feature type="binding site" evidence="1">
    <location>
        <position position="73"/>
    </location>
    <ligand>
        <name>UDP-N-acetyl-alpha-D-glucosamine</name>
        <dbReference type="ChEBI" id="CHEBI:57705"/>
    </ligand>
</feature>
<feature type="binding site" evidence="1">
    <location>
        <begin position="78"/>
        <end position="79"/>
    </location>
    <ligand>
        <name>UDP-N-acetyl-alpha-D-glucosamine</name>
        <dbReference type="ChEBI" id="CHEBI:57705"/>
    </ligand>
</feature>
<feature type="binding site" evidence="1">
    <location>
        <begin position="99"/>
        <end position="101"/>
    </location>
    <ligand>
        <name>UDP-N-acetyl-alpha-D-glucosamine</name>
        <dbReference type="ChEBI" id="CHEBI:57705"/>
    </ligand>
</feature>
<feature type="binding site" evidence="1">
    <location>
        <position position="101"/>
    </location>
    <ligand>
        <name>Mg(2+)</name>
        <dbReference type="ChEBI" id="CHEBI:18420"/>
    </ligand>
</feature>
<feature type="binding site" evidence="1">
    <location>
        <position position="136"/>
    </location>
    <ligand>
        <name>UDP-N-acetyl-alpha-D-glucosamine</name>
        <dbReference type="ChEBI" id="CHEBI:57705"/>
    </ligand>
</feature>
<feature type="binding site" evidence="1">
    <location>
        <position position="151"/>
    </location>
    <ligand>
        <name>UDP-N-acetyl-alpha-D-glucosamine</name>
        <dbReference type="ChEBI" id="CHEBI:57705"/>
    </ligand>
</feature>
<feature type="binding site" evidence="1">
    <location>
        <position position="166"/>
    </location>
    <ligand>
        <name>UDP-N-acetyl-alpha-D-glucosamine</name>
        <dbReference type="ChEBI" id="CHEBI:57705"/>
    </ligand>
</feature>
<feature type="binding site" evidence="1">
    <location>
        <position position="224"/>
    </location>
    <ligand>
        <name>Mg(2+)</name>
        <dbReference type="ChEBI" id="CHEBI:18420"/>
    </ligand>
</feature>
<feature type="binding site" evidence="1">
    <location>
        <position position="224"/>
    </location>
    <ligand>
        <name>UDP-N-acetyl-alpha-D-glucosamine</name>
        <dbReference type="ChEBI" id="CHEBI:57705"/>
    </ligand>
</feature>
<feature type="binding site" evidence="1">
    <location>
        <position position="330"/>
    </location>
    <ligand>
        <name>UDP-N-acetyl-alpha-D-glucosamine</name>
        <dbReference type="ChEBI" id="CHEBI:57705"/>
    </ligand>
</feature>
<feature type="binding site" evidence="1">
    <location>
        <position position="348"/>
    </location>
    <ligand>
        <name>UDP-N-acetyl-alpha-D-glucosamine</name>
        <dbReference type="ChEBI" id="CHEBI:57705"/>
    </ligand>
</feature>
<feature type="binding site" evidence="1">
    <location>
        <position position="363"/>
    </location>
    <ligand>
        <name>UDP-N-acetyl-alpha-D-glucosamine</name>
        <dbReference type="ChEBI" id="CHEBI:57705"/>
    </ligand>
</feature>
<feature type="binding site" evidence="1">
    <location>
        <position position="374"/>
    </location>
    <ligand>
        <name>UDP-N-acetyl-alpha-D-glucosamine</name>
        <dbReference type="ChEBI" id="CHEBI:57705"/>
    </ligand>
</feature>
<feature type="binding site" evidence="1">
    <location>
        <position position="377"/>
    </location>
    <ligand>
        <name>acetyl-CoA</name>
        <dbReference type="ChEBI" id="CHEBI:57288"/>
    </ligand>
</feature>
<feature type="binding site" evidence="1">
    <location>
        <begin position="383"/>
        <end position="384"/>
    </location>
    <ligand>
        <name>acetyl-CoA</name>
        <dbReference type="ChEBI" id="CHEBI:57288"/>
    </ligand>
</feature>
<feature type="binding site" evidence="1">
    <location>
        <position position="402"/>
    </location>
    <ligand>
        <name>acetyl-CoA</name>
        <dbReference type="ChEBI" id="CHEBI:57288"/>
    </ligand>
</feature>
<feature type="binding site" evidence="1">
    <location>
        <position position="420"/>
    </location>
    <ligand>
        <name>acetyl-CoA</name>
        <dbReference type="ChEBI" id="CHEBI:57288"/>
    </ligand>
</feature>
<feature type="binding site" evidence="1">
    <location>
        <position position="437"/>
    </location>
    <ligand>
        <name>acetyl-CoA</name>
        <dbReference type="ChEBI" id="CHEBI:57288"/>
    </ligand>
</feature>
<reference key="1">
    <citation type="journal article" date="2006" name="J. Bacteriol.">
        <title>Chromosome rearrangement and diversification of Francisella tularensis revealed by the type B (OSU18) genome sequence.</title>
        <authorList>
            <person name="Petrosino J.F."/>
            <person name="Xiang Q."/>
            <person name="Karpathy S.E."/>
            <person name="Jiang H."/>
            <person name="Yerrapragada S."/>
            <person name="Liu Y."/>
            <person name="Gioia J."/>
            <person name="Hemphill L."/>
            <person name="Gonzalez A."/>
            <person name="Raghavan T.M."/>
            <person name="Uzman A."/>
            <person name="Fox G.E."/>
            <person name="Highlander S."/>
            <person name="Reichard M."/>
            <person name="Morton R.J."/>
            <person name="Clinkenbeard K.D."/>
            <person name="Weinstock G.M."/>
        </authorList>
    </citation>
    <scope>NUCLEOTIDE SEQUENCE [LARGE SCALE GENOMIC DNA]</scope>
    <source>
        <strain>OSU18</strain>
    </source>
</reference>
<proteinExistence type="inferred from homology"/>
<gene>
    <name evidence="1" type="primary">glmU</name>
    <name type="ordered locus">FTH_0450</name>
</gene>
<dbReference type="EC" id="2.7.7.23" evidence="1"/>
<dbReference type="EC" id="2.3.1.157" evidence="1"/>
<dbReference type="EMBL" id="CP000437">
    <property type="protein sequence ID" value="ABI82438.1"/>
    <property type="molecule type" value="Genomic_DNA"/>
</dbReference>
<dbReference type="RefSeq" id="WP_011648596.1">
    <property type="nucleotide sequence ID" value="NC_017463.1"/>
</dbReference>
<dbReference type="SMR" id="Q0BN96"/>
<dbReference type="KEGG" id="fth:FTH_0450"/>
<dbReference type="UniPathway" id="UPA00113">
    <property type="reaction ID" value="UER00532"/>
</dbReference>
<dbReference type="UniPathway" id="UPA00113">
    <property type="reaction ID" value="UER00533"/>
</dbReference>
<dbReference type="UniPathway" id="UPA00973"/>
<dbReference type="GO" id="GO:0005737">
    <property type="term" value="C:cytoplasm"/>
    <property type="evidence" value="ECO:0007669"/>
    <property type="project" value="UniProtKB-SubCell"/>
</dbReference>
<dbReference type="GO" id="GO:0016020">
    <property type="term" value="C:membrane"/>
    <property type="evidence" value="ECO:0007669"/>
    <property type="project" value="GOC"/>
</dbReference>
<dbReference type="GO" id="GO:0019134">
    <property type="term" value="F:glucosamine-1-phosphate N-acetyltransferase activity"/>
    <property type="evidence" value="ECO:0007669"/>
    <property type="project" value="UniProtKB-UniRule"/>
</dbReference>
<dbReference type="GO" id="GO:0000287">
    <property type="term" value="F:magnesium ion binding"/>
    <property type="evidence" value="ECO:0007669"/>
    <property type="project" value="UniProtKB-UniRule"/>
</dbReference>
<dbReference type="GO" id="GO:0003977">
    <property type="term" value="F:UDP-N-acetylglucosamine diphosphorylase activity"/>
    <property type="evidence" value="ECO:0007669"/>
    <property type="project" value="UniProtKB-UniRule"/>
</dbReference>
<dbReference type="GO" id="GO:0000902">
    <property type="term" value="P:cell morphogenesis"/>
    <property type="evidence" value="ECO:0007669"/>
    <property type="project" value="UniProtKB-UniRule"/>
</dbReference>
<dbReference type="GO" id="GO:0071555">
    <property type="term" value="P:cell wall organization"/>
    <property type="evidence" value="ECO:0007669"/>
    <property type="project" value="UniProtKB-KW"/>
</dbReference>
<dbReference type="GO" id="GO:0009245">
    <property type="term" value="P:lipid A biosynthetic process"/>
    <property type="evidence" value="ECO:0007669"/>
    <property type="project" value="UniProtKB-UniRule"/>
</dbReference>
<dbReference type="GO" id="GO:0009252">
    <property type="term" value="P:peptidoglycan biosynthetic process"/>
    <property type="evidence" value="ECO:0007669"/>
    <property type="project" value="UniProtKB-UniRule"/>
</dbReference>
<dbReference type="GO" id="GO:0008360">
    <property type="term" value="P:regulation of cell shape"/>
    <property type="evidence" value="ECO:0007669"/>
    <property type="project" value="UniProtKB-KW"/>
</dbReference>
<dbReference type="GO" id="GO:0006048">
    <property type="term" value="P:UDP-N-acetylglucosamine biosynthetic process"/>
    <property type="evidence" value="ECO:0007669"/>
    <property type="project" value="UniProtKB-UniPathway"/>
</dbReference>
<dbReference type="CDD" id="cd02540">
    <property type="entry name" value="GT2_GlmU_N_bac"/>
    <property type="match status" value="1"/>
</dbReference>
<dbReference type="CDD" id="cd03353">
    <property type="entry name" value="LbH_GlmU_C"/>
    <property type="match status" value="1"/>
</dbReference>
<dbReference type="Gene3D" id="2.160.10.10">
    <property type="entry name" value="Hexapeptide repeat proteins"/>
    <property type="match status" value="1"/>
</dbReference>
<dbReference type="Gene3D" id="3.90.550.10">
    <property type="entry name" value="Spore Coat Polysaccharide Biosynthesis Protein SpsA, Chain A"/>
    <property type="match status" value="1"/>
</dbReference>
<dbReference type="HAMAP" id="MF_01631">
    <property type="entry name" value="GlmU"/>
    <property type="match status" value="1"/>
</dbReference>
<dbReference type="InterPro" id="IPR005882">
    <property type="entry name" value="Bifunctional_GlmU"/>
</dbReference>
<dbReference type="InterPro" id="IPR050065">
    <property type="entry name" value="GlmU-like"/>
</dbReference>
<dbReference type="InterPro" id="IPR038009">
    <property type="entry name" value="GlmU_C_LbH"/>
</dbReference>
<dbReference type="InterPro" id="IPR001451">
    <property type="entry name" value="Hexapep"/>
</dbReference>
<dbReference type="InterPro" id="IPR018357">
    <property type="entry name" value="Hexapep_transf_CS"/>
</dbReference>
<dbReference type="InterPro" id="IPR025877">
    <property type="entry name" value="MobA-like_NTP_Trfase"/>
</dbReference>
<dbReference type="InterPro" id="IPR029044">
    <property type="entry name" value="Nucleotide-diphossugar_trans"/>
</dbReference>
<dbReference type="InterPro" id="IPR011004">
    <property type="entry name" value="Trimer_LpxA-like_sf"/>
</dbReference>
<dbReference type="NCBIfam" id="TIGR01173">
    <property type="entry name" value="glmU"/>
    <property type="match status" value="1"/>
</dbReference>
<dbReference type="PANTHER" id="PTHR43584:SF3">
    <property type="entry name" value="BIFUNCTIONAL PROTEIN GLMU"/>
    <property type="match status" value="1"/>
</dbReference>
<dbReference type="PANTHER" id="PTHR43584">
    <property type="entry name" value="NUCLEOTIDYL TRANSFERASE"/>
    <property type="match status" value="1"/>
</dbReference>
<dbReference type="Pfam" id="PF00132">
    <property type="entry name" value="Hexapep"/>
    <property type="match status" value="2"/>
</dbReference>
<dbReference type="Pfam" id="PF12804">
    <property type="entry name" value="NTP_transf_3"/>
    <property type="match status" value="1"/>
</dbReference>
<dbReference type="SUPFAM" id="SSF53448">
    <property type="entry name" value="Nucleotide-diphospho-sugar transferases"/>
    <property type="match status" value="1"/>
</dbReference>
<dbReference type="SUPFAM" id="SSF51161">
    <property type="entry name" value="Trimeric LpxA-like enzymes"/>
    <property type="match status" value="1"/>
</dbReference>
<dbReference type="PROSITE" id="PS00101">
    <property type="entry name" value="HEXAPEP_TRANSFERASES"/>
    <property type="match status" value="1"/>
</dbReference>
<evidence type="ECO:0000255" key="1">
    <source>
        <dbReference type="HAMAP-Rule" id="MF_01631"/>
    </source>
</evidence>